<reference key="1">
    <citation type="journal article" date="2005" name="Science">
        <title>The genome of the basidiomycetous yeast and human pathogen Cryptococcus neoformans.</title>
        <authorList>
            <person name="Loftus B.J."/>
            <person name="Fung E."/>
            <person name="Roncaglia P."/>
            <person name="Rowley D."/>
            <person name="Amedeo P."/>
            <person name="Bruno D."/>
            <person name="Vamathevan J."/>
            <person name="Miranda M."/>
            <person name="Anderson I.J."/>
            <person name="Fraser J.A."/>
            <person name="Allen J.E."/>
            <person name="Bosdet I.E."/>
            <person name="Brent M.R."/>
            <person name="Chiu R."/>
            <person name="Doering T.L."/>
            <person name="Donlin M.J."/>
            <person name="D'Souza C.A."/>
            <person name="Fox D.S."/>
            <person name="Grinberg V."/>
            <person name="Fu J."/>
            <person name="Fukushima M."/>
            <person name="Haas B.J."/>
            <person name="Huang J.C."/>
            <person name="Janbon G."/>
            <person name="Jones S.J.M."/>
            <person name="Koo H.L."/>
            <person name="Krzywinski M.I."/>
            <person name="Kwon-Chung K.J."/>
            <person name="Lengeler K.B."/>
            <person name="Maiti R."/>
            <person name="Marra M.A."/>
            <person name="Marra R.E."/>
            <person name="Mathewson C.A."/>
            <person name="Mitchell T.G."/>
            <person name="Pertea M."/>
            <person name="Riggs F.R."/>
            <person name="Salzberg S.L."/>
            <person name="Schein J.E."/>
            <person name="Shvartsbeyn A."/>
            <person name="Shin H."/>
            <person name="Shumway M."/>
            <person name="Specht C.A."/>
            <person name="Suh B.B."/>
            <person name="Tenney A."/>
            <person name="Utterback T.R."/>
            <person name="Wickes B.L."/>
            <person name="Wortman J.R."/>
            <person name="Wye N.H."/>
            <person name="Kronstad J.W."/>
            <person name="Lodge J.K."/>
            <person name="Heitman J."/>
            <person name="Davis R.W."/>
            <person name="Fraser C.M."/>
            <person name="Hyman R.W."/>
        </authorList>
    </citation>
    <scope>NUCLEOTIDE SEQUENCE [LARGE SCALE GENOMIC DNA]</scope>
    <source>
        <strain>B-3501A</strain>
    </source>
</reference>
<organism>
    <name type="scientific">Cryptococcus neoformans var. neoformans serotype D (strain B-3501A)</name>
    <name type="common">Filobasidiella neoformans</name>
    <dbReference type="NCBI Taxonomy" id="283643"/>
    <lineage>
        <taxon>Eukaryota</taxon>
        <taxon>Fungi</taxon>
        <taxon>Dikarya</taxon>
        <taxon>Basidiomycota</taxon>
        <taxon>Agaricomycotina</taxon>
        <taxon>Tremellomycetes</taxon>
        <taxon>Tremellales</taxon>
        <taxon>Cryptococcaceae</taxon>
        <taxon>Cryptococcus</taxon>
        <taxon>Cryptococcus neoformans species complex</taxon>
    </lineage>
</organism>
<evidence type="ECO:0000255" key="1">
    <source>
        <dbReference type="HAMAP-Rule" id="MF_03019"/>
    </source>
</evidence>
<gene>
    <name evidence="1" type="primary">BNA1</name>
    <name type="ordered locus">CNBB0170</name>
</gene>
<keyword id="KW-0963">Cytoplasm</keyword>
<keyword id="KW-0223">Dioxygenase</keyword>
<keyword id="KW-0408">Iron</keyword>
<keyword id="KW-0479">Metal-binding</keyword>
<keyword id="KW-0560">Oxidoreductase</keyword>
<keyword id="KW-0662">Pyridine nucleotide biosynthesis</keyword>
<name>3HAO_CRYNB</name>
<accession>P0CL87</accession>
<accession>Q55YJ9</accession>
<accession>Q5KLD9</accession>
<dbReference type="EC" id="1.13.11.6" evidence="1"/>
<dbReference type="EMBL" id="AAEY01000006">
    <property type="protein sequence ID" value="EAL22796.1"/>
    <property type="molecule type" value="Genomic_DNA"/>
</dbReference>
<dbReference type="RefSeq" id="XP_777443.1">
    <property type="nucleotide sequence ID" value="XM_772350.1"/>
</dbReference>
<dbReference type="SMR" id="P0CL87"/>
<dbReference type="EnsemblFungi" id="AAW41998">
    <property type="protein sequence ID" value="AAW41998"/>
    <property type="gene ID" value="CNB05620"/>
</dbReference>
<dbReference type="GeneID" id="4934109"/>
<dbReference type="KEGG" id="cnb:CNBB0170"/>
<dbReference type="VEuPathDB" id="FungiDB:CNBB0170"/>
<dbReference type="HOGENOM" id="CLU_095765_0_0_1"/>
<dbReference type="OrthoDB" id="15at5206"/>
<dbReference type="UniPathway" id="UPA00253">
    <property type="reaction ID" value="UER00330"/>
</dbReference>
<dbReference type="GO" id="GO:0005737">
    <property type="term" value="C:cytoplasm"/>
    <property type="evidence" value="ECO:0007669"/>
    <property type="project" value="UniProtKB-SubCell"/>
</dbReference>
<dbReference type="GO" id="GO:0000334">
    <property type="term" value="F:3-hydroxyanthranilate 3,4-dioxygenase activity"/>
    <property type="evidence" value="ECO:0007669"/>
    <property type="project" value="UniProtKB-UniRule"/>
</dbReference>
<dbReference type="GO" id="GO:0008198">
    <property type="term" value="F:ferrous iron binding"/>
    <property type="evidence" value="ECO:0007669"/>
    <property type="project" value="UniProtKB-UniRule"/>
</dbReference>
<dbReference type="GO" id="GO:0034354">
    <property type="term" value="P:'de novo' NAD biosynthetic process from L-tryptophan"/>
    <property type="evidence" value="ECO:0007669"/>
    <property type="project" value="UniProtKB-UniRule"/>
</dbReference>
<dbReference type="GO" id="GO:0043420">
    <property type="term" value="P:anthranilate metabolic process"/>
    <property type="evidence" value="ECO:0007669"/>
    <property type="project" value="UniProtKB-UniRule"/>
</dbReference>
<dbReference type="GO" id="GO:0006569">
    <property type="term" value="P:L-tryptophan catabolic process"/>
    <property type="evidence" value="ECO:0007669"/>
    <property type="project" value="UniProtKB-UniRule"/>
</dbReference>
<dbReference type="GO" id="GO:0019805">
    <property type="term" value="P:quinolinate biosynthetic process"/>
    <property type="evidence" value="ECO:0007669"/>
    <property type="project" value="UniProtKB-UniRule"/>
</dbReference>
<dbReference type="CDD" id="cd06123">
    <property type="entry name" value="cupin_HAO"/>
    <property type="match status" value="1"/>
</dbReference>
<dbReference type="FunFam" id="2.60.120.10:FF:000131">
    <property type="entry name" value="3-hydroxyanthranilate 3,4-dioxygenase"/>
    <property type="match status" value="1"/>
</dbReference>
<dbReference type="Gene3D" id="2.60.120.10">
    <property type="entry name" value="Jelly Rolls"/>
    <property type="match status" value="1"/>
</dbReference>
<dbReference type="HAMAP" id="MF_00825">
    <property type="entry name" value="3_HAO"/>
    <property type="match status" value="1"/>
</dbReference>
<dbReference type="InterPro" id="IPR010329">
    <property type="entry name" value="3hydroanth_dOase"/>
</dbReference>
<dbReference type="InterPro" id="IPR014710">
    <property type="entry name" value="RmlC-like_jellyroll"/>
</dbReference>
<dbReference type="InterPro" id="IPR011051">
    <property type="entry name" value="RmlC_Cupin_sf"/>
</dbReference>
<dbReference type="NCBIfam" id="TIGR03037">
    <property type="entry name" value="anthran_nbaC"/>
    <property type="match status" value="1"/>
</dbReference>
<dbReference type="PANTHER" id="PTHR15497">
    <property type="entry name" value="3-HYDROXYANTHRANILATE 3,4-DIOXYGENASE"/>
    <property type="match status" value="1"/>
</dbReference>
<dbReference type="PANTHER" id="PTHR15497:SF3">
    <property type="entry name" value="3-HYDROXYANTHRANILATE 3,4-DIOXYGENASE 2"/>
    <property type="match status" value="1"/>
</dbReference>
<dbReference type="Pfam" id="PF06052">
    <property type="entry name" value="3-HAO"/>
    <property type="match status" value="1"/>
</dbReference>
<dbReference type="SUPFAM" id="SSF51182">
    <property type="entry name" value="RmlC-like cupins"/>
    <property type="match status" value="1"/>
</dbReference>
<proteinExistence type="inferred from homology"/>
<sequence>MLPPPINFPKWLEANSHLLKPPVGNKCLYKGSNFITMIVGGPNTRVDFHINTTEEWFYQYKGAMTLKVVDEGKIKDIVIEEGDMFLLPANTPHSPRRVADTIGVVMEMVRPGEFLDTMRWYCPSPTHANAEKLVTIREVTFYCSDLDTQLKPVIERWMSDEEWRRCPECGEVAPPK</sequence>
<comment type="function">
    <text evidence="1">Catalyzes the oxidative ring opening of 3-hydroxyanthranilate to 2-amino-3-carboxymuconate semialdehyde, which spontaneously cyclizes to quinolinate.</text>
</comment>
<comment type="catalytic activity">
    <reaction evidence="1">
        <text>3-hydroxyanthranilate + O2 = (2Z,4Z)-2-amino-3-carboxymuconate 6-semialdehyde</text>
        <dbReference type="Rhea" id="RHEA:17953"/>
        <dbReference type="ChEBI" id="CHEBI:15379"/>
        <dbReference type="ChEBI" id="CHEBI:36559"/>
        <dbReference type="ChEBI" id="CHEBI:77612"/>
        <dbReference type="EC" id="1.13.11.6"/>
    </reaction>
</comment>
<comment type="cofactor">
    <cofactor evidence="1">
        <name>Fe(2+)</name>
        <dbReference type="ChEBI" id="CHEBI:29033"/>
    </cofactor>
</comment>
<comment type="pathway">
    <text evidence="1">Cofactor biosynthesis; NAD(+) biosynthesis; quinolinate from L-kynurenine: step 3/3.</text>
</comment>
<comment type="subcellular location">
    <subcellularLocation>
        <location evidence="1">Cytoplasm</location>
    </subcellularLocation>
</comment>
<comment type="similarity">
    <text evidence="1">Belongs to the 3-HAO family.</text>
</comment>
<protein>
    <recommendedName>
        <fullName evidence="1">3-hydroxyanthranilate 3,4-dioxygenase</fullName>
        <ecNumber evidence="1">1.13.11.6</ecNumber>
    </recommendedName>
    <alternativeName>
        <fullName evidence="1">3-hydroxyanthranilate oxygenase</fullName>
        <shortName evidence="1">3-HAO</shortName>
    </alternativeName>
    <alternativeName>
        <fullName evidence="1">3-hydroxyanthranilic acid dioxygenase</fullName>
        <shortName evidence="1">HAD</shortName>
    </alternativeName>
    <alternativeName>
        <fullName evidence="1">Biosynthesis of nicotinic acid protein 1</fullName>
    </alternativeName>
</protein>
<feature type="chain" id="PRO_0000409994" description="3-hydroxyanthranilate 3,4-dioxygenase">
    <location>
        <begin position="1"/>
        <end position="176"/>
    </location>
</feature>
<feature type="binding site" evidence="1">
    <location>
        <position position="45"/>
    </location>
    <ligand>
        <name>O2</name>
        <dbReference type="ChEBI" id="CHEBI:15379"/>
    </ligand>
</feature>
<feature type="binding site" evidence="1">
    <location>
        <position position="49"/>
    </location>
    <ligand>
        <name>Fe cation</name>
        <dbReference type="ChEBI" id="CHEBI:24875"/>
        <note>catalytic</note>
    </ligand>
</feature>
<feature type="binding site" evidence="1">
    <location>
        <position position="55"/>
    </location>
    <ligand>
        <name>Fe cation</name>
        <dbReference type="ChEBI" id="CHEBI:24875"/>
        <note>catalytic</note>
    </ligand>
</feature>
<feature type="binding site" evidence="1">
    <location>
        <position position="55"/>
    </location>
    <ligand>
        <name>substrate</name>
    </ligand>
</feature>
<feature type="binding site" evidence="1">
    <location>
        <position position="93"/>
    </location>
    <ligand>
        <name>Fe cation</name>
        <dbReference type="ChEBI" id="CHEBI:24875"/>
        <note>catalytic</note>
    </ligand>
</feature>
<feature type="binding site" evidence="1">
    <location>
        <position position="97"/>
    </location>
    <ligand>
        <name>substrate</name>
    </ligand>
</feature>
<feature type="binding site" evidence="1">
    <location>
        <position position="107"/>
    </location>
    <ligand>
        <name>substrate</name>
    </ligand>
</feature>